<evidence type="ECO:0000255" key="1">
    <source>
        <dbReference type="HAMAP-Rule" id="MF_01686"/>
    </source>
</evidence>
<name>TYSY_METJA</name>
<gene>
    <name evidence="1" type="primary">thyA</name>
    <name type="ordered locus">MJ0511</name>
</gene>
<sequence length="222" mass="25933">MLCIKKPSVASAFNELIPKILKDGEVVETEFEERTKEIRNTIIEITNPKLKKVPEKYPLGEKAVEEYTKNLLYGSKNVFSYDYHQRLFEYPYADEKINQIDYIIEKLNQQKNSRRAVAITWNPKIDIEVSRDERGSVPCLQLVQFLIRNGKLYQTVIFRSNDALLAFVSNAIGLITLGEYIAKKVGVGYGTYTHHAISMHIYVDRDFDYIKKYFPECLKYLW</sequence>
<feature type="chain" id="PRO_0000141055" description="Putative thymidylate synthase">
    <location>
        <begin position="1"/>
        <end position="222"/>
    </location>
</feature>
<feature type="active site" evidence="1">
    <location>
        <position position="139"/>
    </location>
</feature>
<accession>Q57931</accession>
<proteinExistence type="inferred from homology"/>
<protein>
    <recommendedName>
        <fullName evidence="1">Putative thymidylate synthase</fullName>
        <shortName evidence="1">TS</shortName>
        <shortName evidence="1">TSase</shortName>
        <ecNumber evidence="1">2.1.1.-</ecNumber>
    </recommendedName>
</protein>
<keyword id="KW-0963">Cytoplasm</keyword>
<keyword id="KW-0489">Methyltransferase</keyword>
<keyword id="KW-0545">Nucleotide biosynthesis</keyword>
<keyword id="KW-1185">Reference proteome</keyword>
<keyword id="KW-0808">Transferase</keyword>
<comment type="function">
    <text evidence="1">May catalyze the biosynthesis of dTMP using an unknown cosubstrate.</text>
</comment>
<comment type="pathway">
    <text evidence="1">Pyrimidine metabolism; dTTP biosynthesis.</text>
</comment>
<comment type="subunit">
    <text evidence="1">Monomer.</text>
</comment>
<comment type="subcellular location">
    <subcellularLocation>
        <location evidence="1">Cytoplasm</location>
    </subcellularLocation>
</comment>
<comment type="similarity">
    <text evidence="1">Belongs to the thymidylate synthase family. Archaeal-type ThyA subfamily.</text>
</comment>
<organism>
    <name type="scientific">Methanocaldococcus jannaschii (strain ATCC 43067 / DSM 2661 / JAL-1 / JCM 10045 / NBRC 100440)</name>
    <name type="common">Methanococcus jannaschii</name>
    <dbReference type="NCBI Taxonomy" id="243232"/>
    <lineage>
        <taxon>Archaea</taxon>
        <taxon>Methanobacteriati</taxon>
        <taxon>Methanobacteriota</taxon>
        <taxon>Methanomada group</taxon>
        <taxon>Methanococci</taxon>
        <taxon>Methanococcales</taxon>
        <taxon>Methanocaldococcaceae</taxon>
        <taxon>Methanocaldococcus</taxon>
    </lineage>
</organism>
<dbReference type="EC" id="2.1.1.-" evidence="1"/>
<dbReference type="EMBL" id="L77117">
    <property type="protein sequence ID" value="AAB98502.1"/>
    <property type="molecule type" value="Genomic_DNA"/>
</dbReference>
<dbReference type="PIR" id="G64363">
    <property type="entry name" value="G64363"/>
</dbReference>
<dbReference type="RefSeq" id="WP_010870012.1">
    <property type="nucleotide sequence ID" value="NC_000909.1"/>
</dbReference>
<dbReference type="SMR" id="Q57931"/>
<dbReference type="FunCoup" id="Q57931">
    <property type="interactions" value="26"/>
</dbReference>
<dbReference type="STRING" id="243232.MJ_0511"/>
<dbReference type="PaxDb" id="243232-MJ_0511"/>
<dbReference type="EnsemblBacteria" id="AAB98502">
    <property type="protein sequence ID" value="AAB98502"/>
    <property type="gene ID" value="MJ_0511"/>
</dbReference>
<dbReference type="GeneID" id="1451373"/>
<dbReference type="KEGG" id="mja:MJ_0511"/>
<dbReference type="eggNOG" id="arCOG03214">
    <property type="taxonomic scope" value="Archaea"/>
</dbReference>
<dbReference type="HOGENOM" id="CLU_084975_0_0_2"/>
<dbReference type="InParanoid" id="Q57931"/>
<dbReference type="OrthoDB" id="50118at2157"/>
<dbReference type="PhylomeDB" id="Q57931"/>
<dbReference type="UniPathway" id="UPA00575"/>
<dbReference type="Proteomes" id="UP000000805">
    <property type="component" value="Chromosome"/>
</dbReference>
<dbReference type="GO" id="GO:0005829">
    <property type="term" value="C:cytosol"/>
    <property type="evidence" value="ECO:0000318"/>
    <property type="project" value="GO_Central"/>
</dbReference>
<dbReference type="GO" id="GO:0004799">
    <property type="term" value="F:thymidylate synthase activity"/>
    <property type="evidence" value="ECO:0000318"/>
    <property type="project" value="GO_Central"/>
</dbReference>
<dbReference type="GO" id="GO:0006231">
    <property type="term" value="P:dTMP biosynthetic process"/>
    <property type="evidence" value="ECO:0000318"/>
    <property type="project" value="GO_Central"/>
</dbReference>
<dbReference type="GO" id="GO:0006235">
    <property type="term" value="P:dTTP biosynthetic process"/>
    <property type="evidence" value="ECO:0007669"/>
    <property type="project" value="UniProtKB-UniRule"/>
</dbReference>
<dbReference type="GO" id="GO:0032259">
    <property type="term" value="P:methylation"/>
    <property type="evidence" value="ECO:0007669"/>
    <property type="project" value="UniProtKB-KW"/>
</dbReference>
<dbReference type="CDD" id="cd00351">
    <property type="entry name" value="TS_Pyrimidine_HMase"/>
    <property type="match status" value="1"/>
</dbReference>
<dbReference type="Gene3D" id="3.30.572.10">
    <property type="entry name" value="Thymidylate synthase/dCMP hydroxymethylase domain"/>
    <property type="match status" value="1"/>
</dbReference>
<dbReference type="HAMAP" id="MF_01686">
    <property type="entry name" value="Thymidy_synth_arch"/>
    <property type="match status" value="1"/>
</dbReference>
<dbReference type="InterPro" id="IPR045097">
    <property type="entry name" value="Thymidate_synth/dCMP_Mease"/>
</dbReference>
<dbReference type="InterPro" id="IPR023451">
    <property type="entry name" value="Thymidate_synth/dCMP_Mease_dom"/>
</dbReference>
<dbReference type="InterPro" id="IPR036926">
    <property type="entry name" value="Thymidate_synth/dCMP_Mease_sf"/>
</dbReference>
<dbReference type="InterPro" id="IPR014620">
    <property type="entry name" value="Thymidylate_synthase_arc"/>
</dbReference>
<dbReference type="InterPro" id="IPR020940">
    <property type="entry name" value="Thymidylate_synthase_AS"/>
</dbReference>
<dbReference type="NCBIfam" id="TIGR03283">
    <property type="entry name" value="thy_syn_methano"/>
    <property type="match status" value="1"/>
</dbReference>
<dbReference type="PANTHER" id="PTHR11548">
    <property type="entry name" value="THYMIDYLATE SYNTHASE 1"/>
    <property type="match status" value="1"/>
</dbReference>
<dbReference type="PANTHER" id="PTHR11548:SF1">
    <property type="entry name" value="THYMIDYLATE SYNTHASE 1"/>
    <property type="match status" value="1"/>
</dbReference>
<dbReference type="Pfam" id="PF00303">
    <property type="entry name" value="Thymidylat_synt"/>
    <property type="match status" value="1"/>
</dbReference>
<dbReference type="PIRSF" id="PIRSF036752">
    <property type="entry name" value="TSase_MJ051"/>
    <property type="match status" value="1"/>
</dbReference>
<dbReference type="SUPFAM" id="SSF55831">
    <property type="entry name" value="Thymidylate synthase/dCMP hydroxymethylase"/>
    <property type="match status" value="1"/>
</dbReference>
<dbReference type="PROSITE" id="PS00091">
    <property type="entry name" value="THYMIDYLATE_SYNTHASE"/>
    <property type="match status" value="1"/>
</dbReference>
<reference key="1">
    <citation type="journal article" date="1996" name="Science">
        <title>Complete genome sequence of the methanogenic archaeon, Methanococcus jannaschii.</title>
        <authorList>
            <person name="Bult C.J."/>
            <person name="White O."/>
            <person name="Olsen G.J."/>
            <person name="Zhou L."/>
            <person name="Fleischmann R.D."/>
            <person name="Sutton G.G."/>
            <person name="Blake J.A."/>
            <person name="FitzGerald L.M."/>
            <person name="Clayton R.A."/>
            <person name="Gocayne J.D."/>
            <person name="Kerlavage A.R."/>
            <person name="Dougherty B.A."/>
            <person name="Tomb J.-F."/>
            <person name="Adams M.D."/>
            <person name="Reich C.I."/>
            <person name="Overbeek R."/>
            <person name="Kirkness E.F."/>
            <person name="Weinstock K.G."/>
            <person name="Merrick J.M."/>
            <person name="Glodek A."/>
            <person name="Scott J.L."/>
            <person name="Geoghagen N.S.M."/>
            <person name="Weidman J.F."/>
            <person name="Fuhrmann J.L."/>
            <person name="Nguyen D."/>
            <person name="Utterback T.R."/>
            <person name="Kelley J.M."/>
            <person name="Peterson J.D."/>
            <person name="Sadow P.W."/>
            <person name="Hanna M.C."/>
            <person name="Cotton M.D."/>
            <person name="Roberts K.M."/>
            <person name="Hurst M.A."/>
            <person name="Kaine B.P."/>
            <person name="Borodovsky M."/>
            <person name="Klenk H.-P."/>
            <person name="Fraser C.M."/>
            <person name="Smith H.O."/>
            <person name="Woese C.R."/>
            <person name="Venter J.C."/>
        </authorList>
    </citation>
    <scope>NUCLEOTIDE SEQUENCE [LARGE SCALE GENOMIC DNA]</scope>
    <source>
        <strain>ATCC 43067 / DSM 2661 / JAL-1 / JCM 10045 / NBRC 100440</strain>
    </source>
</reference>